<sequence length="175" mass="18795">MNLDFIKSKIAAVPDFPKPGIMFRDITPLLADPQGLRKTAEAMAQELKNKGIQPTIVAGTESRGFIFGVALAEVLGLGFVPVRKPGKLPRATYSVKYDLEYGSDSLEIHQDAFKVTDEVLVVDDLLATGGTAKATVDLIEKTQAKVAGLIFVMELDGLGGREVLAGYNVSALIKF</sequence>
<keyword id="KW-0963">Cytoplasm</keyword>
<keyword id="KW-0328">Glycosyltransferase</keyword>
<keyword id="KW-0660">Purine salvage</keyword>
<keyword id="KW-0808">Transferase</keyword>
<dbReference type="EC" id="2.4.2.7" evidence="1"/>
<dbReference type="EMBL" id="CP000915">
    <property type="protein sequence ID" value="ACD30240.1"/>
    <property type="molecule type" value="Genomic_DNA"/>
</dbReference>
<dbReference type="SMR" id="B2SEZ5"/>
<dbReference type="KEGG" id="ftm:FTM_0142"/>
<dbReference type="HOGENOM" id="CLU_063339_3_0_6"/>
<dbReference type="UniPathway" id="UPA00588">
    <property type="reaction ID" value="UER00646"/>
</dbReference>
<dbReference type="GO" id="GO:0005737">
    <property type="term" value="C:cytoplasm"/>
    <property type="evidence" value="ECO:0007669"/>
    <property type="project" value="UniProtKB-SubCell"/>
</dbReference>
<dbReference type="GO" id="GO:0002055">
    <property type="term" value="F:adenine binding"/>
    <property type="evidence" value="ECO:0007669"/>
    <property type="project" value="TreeGrafter"/>
</dbReference>
<dbReference type="GO" id="GO:0003999">
    <property type="term" value="F:adenine phosphoribosyltransferase activity"/>
    <property type="evidence" value="ECO:0007669"/>
    <property type="project" value="UniProtKB-UniRule"/>
</dbReference>
<dbReference type="GO" id="GO:0016208">
    <property type="term" value="F:AMP binding"/>
    <property type="evidence" value="ECO:0007669"/>
    <property type="project" value="TreeGrafter"/>
</dbReference>
<dbReference type="GO" id="GO:0006168">
    <property type="term" value="P:adenine salvage"/>
    <property type="evidence" value="ECO:0007669"/>
    <property type="project" value="InterPro"/>
</dbReference>
<dbReference type="GO" id="GO:0044209">
    <property type="term" value="P:AMP salvage"/>
    <property type="evidence" value="ECO:0007669"/>
    <property type="project" value="UniProtKB-UniRule"/>
</dbReference>
<dbReference type="GO" id="GO:0006166">
    <property type="term" value="P:purine ribonucleoside salvage"/>
    <property type="evidence" value="ECO:0007669"/>
    <property type="project" value="UniProtKB-KW"/>
</dbReference>
<dbReference type="CDD" id="cd06223">
    <property type="entry name" value="PRTases_typeI"/>
    <property type="match status" value="1"/>
</dbReference>
<dbReference type="FunFam" id="3.40.50.2020:FF:000004">
    <property type="entry name" value="Adenine phosphoribosyltransferase"/>
    <property type="match status" value="1"/>
</dbReference>
<dbReference type="Gene3D" id="3.40.50.2020">
    <property type="match status" value="1"/>
</dbReference>
<dbReference type="HAMAP" id="MF_00004">
    <property type="entry name" value="Aden_phosphoribosyltr"/>
    <property type="match status" value="1"/>
</dbReference>
<dbReference type="InterPro" id="IPR005764">
    <property type="entry name" value="Ade_phspho_trans"/>
</dbReference>
<dbReference type="InterPro" id="IPR000836">
    <property type="entry name" value="PRibTrfase_dom"/>
</dbReference>
<dbReference type="InterPro" id="IPR029057">
    <property type="entry name" value="PRTase-like"/>
</dbReference>
<dbReference type="InterPro" id="IPR050054">
    <property type="entry name" value="UPRTase/APRTase"/>
</dbReference>
<dbReference type="NCBIfam" id="TIGR01090">
    <property type="entry name" value="apt"/>
    <property type="match status" value="1"/>
</dbReference>
<dbReference type="NCBIfam" id="NF002634">
    <property type="entry name" value="PRK02304.1-3"/>
    <property type="match status" value="1"/>
</dbReference>
<dbReference type="NCBIfam" id="NF002636">
    <property type="entry name" value="PRK02304.1-5"/>
    <property type="match status" value="1"/>
</dbReference>
<dbReference type="PANTHER" id="PTHR32315">
    <property type="entry name" value="ADENINE PHOSPHORIBOSYLTRANSFERASE"/>
    <property type="match status" value="1"/>
</dbReference>
<dbReference type="PANTHER" id="PTHR32315:SF3">
    <property type="entry name" value="ADENINE PHOSPHORIBOSYLTRANSFERASE"/>
    <property type="match status" value="1"/>
</dbReference>
<dbReference type="Pfam" id="PF00156">
    <property type="entry name" value="Pribosyltran"/>
    <property type="match status" value="1"/>
</dbReference>
<dbReference type="SUPFAM" id="SSF53271">
    <property type="entry name" value="PRTase-like"/>
    <property type="match status" value="1"/>
</dbReference>
<dbReference type="PROSITE" id="PS00103">
    <property type="entry name" value="PUR_PYR_PR_TRANSFER"/>
    <property type="match status" value="1"/>
</dbReference>
<comment type="function">
    <text evidence="1">Catalyzes a salvage reaction resulting in the formation of AMP, that is energically less costly than de novo synthesis.</text>
</comment>
<comment type="catalytic activity">
    <reaction evidence="1">
        <text>AMP + diphosphate = 5-phospho-alpha-D-ribose 1-diphosphate + adenine</text>
        <dbReference type="Rhea" id="RHEA:16609"/>
        <dbReference type="ChEBI" id="CHEBI:16708"/>
        <dbReference type="ChEBI" id="CHEBI:33019"/>
        <dbReference type="ChEBI" id="CHEBI:58017"/>
        <dbReference type="ChEBI" id="CHEBI:456215"/>
        <dbReference type="EC" id="2.4.2.7"/>
    </reaction>
</comment>
<comment type="pathway">
    <text evidence="1">Purine metabolism; AMP biosynthesis via salvage pathway; AMP from adenine: step 1/1.</text>
</comment>
<comment type="subunit">
    <text evidence="1">Homodimer.</text>
</comment>
<comment type="subcellular location">
    <subcellularLocation>
        <location evidence="1">Cytoplasm</location>
    </subcellularLocation>
</comment>
<comment type="similarity">
    <text evidence="1">Belongs to the purine/pyrimidine phosphoribosyltransferase family.</text>
</comment>
<reference key="1">
    <citation type="journal article" date="2009" name="PLoS Pathog.">
        <title>Molecular evolutionary consequences of niche restriction in Francisella tularensis, a facultative intracellular pathogen.</title>
        <authorList>
            <person name="Larsson P."/>
            <person name="Elfsmark D."/>
            <person name="Svensson K."/>
            <person name="Wikstroem P."/>
            <person name="Forsman M."/>
            <person name="Brettin T."/>
            <person name="Keim P."/>
            <person name="Johansson A."/>
        </authorList>
    </citation>
    <scope>NUCLEOTIDE SEQUENCE [LARGE SCALE GENOMIC DNA]</scope>
    <source>
        <strain>FSC147</strain>
    </source>
</reference>
<feature type="chain" id="PRO_1000088975" description="Adenine phosphoribosyltransferase">
    <location>
        <begin position="1"/>
        <end position="175"/>
    </location>
</feature>
<accession>B2SEZ5</accession>
<proteinExistence type="inferred from homology"/>
<organism>
    <name type="scientific">Francisella tularensis subsp. mediasiatica (strain FSC147)</name>
    <dbReference type="NCBI Taxonomy" id="441952"/>
    <lineage>
        <taxon>Bacteria</taxon>
        <taxon>Pseudomonadati</taxon>
        <taxon>Pseudomonadota</taxon>
        <taxon>Gammaproteobacteria</taxon>
        <taxon>Thiotrichales</taxon>
        <taxon>Francisellaceae</taxon>
        <taxon>Francisella</taxon>
    </lineage>
</organism>
<evidence type="ECO:0000255" key="1">
    <source>
        <dbReference type="HAMAP-Rule" id="MF_00004"/>
    </source>
</evidence>
<protein>
    <recommendedName>
        <fullName evidence="1">Adenine phosphoribosyltransferase</fullName>
        <shortName evidence="1">APRT</shortName>
        <ecNumber evidence="1">2.4.2.7</ecNumber>
    </recommendedName>
</protein>
<name>APT_FRATM</name>
<gene>
    <name evidence="1" type="primary">apt</name>
    <name type="ordered locus">FTM_0142</name>
</gene>